<gene>
    <name evidence="1" type="primary">rpmB</name>
    <name type="ordered locus">Plav_1706</name>
</gene>
<evidence type="ECO:0000255" key="1">
    <source>
        <dbReference type="HAMAP-Rule" id="MF_00373"/>
    </source>
</evidence>
<evidence type="ECO:0000305" key="2"/>
<feature type="chain" id="PRO_1000072136" description="Large ribosomal subunit protein bL28">
    <location>
        <begin position="1"/>
        <end position="96"/>
    </location>
</feature>
<name>RL28_PARL1</name>
<reference key="1">
    <citation type="journal article" date="2011" name="Stand. Genomic Sci.">
        <title>Complete genome sequence of Parvibaculum lavamentivorans type strain (DS-1(T)).</title>
        <authorList>
            <person name="Schleheck D."/>
            <person name="Weiss M."/>
            <person name="Pitluck S."/>
            <person name="Bruce D."/>
            <person name="Land M.L."/>
            <person name="Han S."/>
            <person name="Saunders E."/>
            <person name="Tapia R."/>
            <person name="Detter C."/>
            <person name="Brettin T."/>
            <person name="Han J."/>
            <person name="Woyke T."/>
            <person name="Goodwin L."/>
            <person name="Pennacchio L."/>
            <person name="Nolan M."/>
            <person name="Cook A.M."/>
            <person name="Kjelleberg S."/>
            <person name="Thomas T."/>
        </authorList>
    </citation>
    <scope>NUCLEOTIDE SEQUENCE [LARGE SCALE GENOMIC DNA]</scope>
    <source>
        <strain>DS-1 / DSM 13023 / NCIMB 13966</strain>
    </source>
</reference>
<dbReference type="EMBL" id="CP000774">
    <property type="protein sequence ID" value="ABS63325.1"/>
    <property type="molecule type" value="Genomic_DNA"/>
</dbReference>
<dbReference type="RefSeq" id="WP_012110617.1">
    <property type="nucleotide sequence ID" value="NC_009719.1"/>
</dbReference>
<dbReference type="SMR" id="A7HTU2"/>
<dbReference type="STRING" id="402881.Plav_1706"/>
<dbReference type="KEGG" id="pla:Plav_1706"/>
<dbReference type="eggNOG" id="COG0227">
    <property type="taxonomic scope" value="Bacteria"/>
</dbReference>
<dbReference type="HOGENOM" id="CLU_064548_4_2_5"/>
<dbReference type="OrthoDB" id="9805609at2"/>
<dbReference type="Proteomes" id="UP000006377">
    <property type="component" value="Chromosome"/>
</dbReference>
<dbReference type="GO" id="GO:0022625">
    <property type="term" value="C:cytosolic large ribosomal subunit"/>
    <property type="evidence" value="ECO:0007669"/>
    <property type="project" value="TreeGrafter"/>
</dbReference>
<dbReference type="GO" id="GO:0003735">
    <property type="term" value="F:structural constituent of ribosome"/>
    <property type="evidence" value="ECO:0007669"/>
    <property type="project" value="InterPro"/>
</dbReference>
<dbReference type="GO" id="GO:0006412">
    <property type="term" value="P:translation"/>
    <property type="evidence" value="ECO:0007669"/>
    <property type="project" value="UniProtKB-UniRule"/>
</dbReference>
<dbReference type="Gene3D" id="2.30.170.40">
    <property type="entry name" value="Ribosomal protein L28/L24"/>
    <property type="match status" value="1"/>
</dbReference>
<dbReference type="HAMAP" id="MF_00373">
    <property type="entry name" value="Ribosomal_bL28"/>
    <property type="match status" value="1"/>
</dbReference>
<dbReference type="InterPro" id="IPR026569">
    <property type="entry name" value="Ribosomal_bL28"/>
</dbReference>
<dbReference type="InterPro" id="IPR034704">
    <property type="entry name" value="Ribosomal_bL28/bL31-like_sf"/>
</dbReference>
<dbReference type="InterPro" id="IPR001383">
    <property type="entry name" value="Ribosomal_bL28_bact-type"/>
</dbReference>
<dbReference type="InterPro" id="IPR037147">
    <property type="entry name" value="Ribosomal_bL28_sf"/>
</dbReference>
<dbReference type="NCBIfam" id="TIGR00009">
    <property type="entry name" value="L28"/>
    <property type="match status" value="1"/>
</dbReference>
<dbReference type="PANTHER" id="PTHR13528">
    <property type="entry name" value="39S RIBOSOMAL PROTEIN L28, MITOCHONDRIAL"/>
    <property type="match status" value="1"/>
</dbReference>
<dbReference type="PANTHER" id="PTHR13528:SF2">
    <property type="entry name" value="LARGE RIBOSOMAL SUBUNIT PROTEIN BL28M"/>
    <property type="match status" value="1"/>
</dbReference>
<dbReference type="Pfam" id="PF00830">
    <property type="entry name" value="Ribosomal_L28"/>
    <property type="match status" value="1"/>
</dbReference>
<dbReference type="SUPFAM" id="SSF143800">
    <property type="entry name" value="L28p-like"/>
    <property type="match status" value="1"/>
</dbReference>
<sequence>MSRRCELSGKAVMSGNNVSHANRKTRRRFLPNLCQVTLISDALGRQFSLRVSAHALRSVEHNGGLDPFLLKASDAQLSSRALKLKRAIEKVQAVAA</sequence>
<accession>A7HTU2</accession>
<comment type="similarity">
    <text evidence="1">Belongs to the bacterial ribosomal protein bL28 family.</text>
</comment>
<keyword id="KW-1185">Reference proteome</keyword>
<keyword id="KW-0687">Ribonucleoprotein</keyword>
<keyword id="KW-0689">Ribosomal protein</keyword>
<organism>
    <name type="scientific">Parvibaculum lavamentivorans (strain DS-1 / DSM 13023 / NCIMB 13966)</name>
    <dbReference type="NCBI Taxonomy" id="402881"/>
    <lineage>
        <taxon>Bacteria</taxon>
        <taxon>Pseudomonadati</taxon>
        <taxon>Pseudomonadota</taxon>
        <taxon>Alphaproteobacteria</taxon>
        <taxon>Hyphomicrobiales</taxon>
        <taxon>Parvibaculaceae</taxon>
        <taxon>Parvibaculum</taxon>
    </lineage>
</organism>
<protein>
    <recommendedName>
        <fullName evidence="1">Large ribosomal subunit protein bL28</fullName>
    </recommendedName>
    <alternativeName>
        <fullName evidence="2">50S ribosomal protein L28</fullName>
    </alternativeName>
</protein>
<proteinExistence type="inferred from homology"/>